<protein>
    <recommendedName>
        <fullName>Outer membrane protein X</fullName>
    </recommendedName>
</protein>
<gene>
    <name type="primary">ompX</name>
    <name type="ordered locus">Z1036</name>
    <name type="ordered locus">ECs0892</name>
</gene>
<proteinExistence type="inferred from homology"/>
<comment type="subcellular location">
    <subcellularLocation>
        <location evidence="1">Cell outer membrane</location>
        <topology evidence="1">Multi-pass membrane protein</topology>
    </subcellularLocation>
</comment>
<comment type="similarity">
    <text evidence="2">Belongs to the outer membrane OOP (TC 1.B.6) superfamily. OmpX family.</text>
</comment>
<name>OMPX_ECO57</name>
<feature type="signal peptide" evidence="1">
    <location>
        <begin position="1"/>
        <end position="23"/>
    </location>
</feature>
<feature type="chain" id="PRO_0000020201" description="Outer membrane protein X">
    <location>
        <begin position="24"/>
        <end position="171"/>
    </location>
</feature>
<feature type="topological domain" description="Periplasmic" evidence="1">
    <location>
        <begin position="24"/>
        <end position="25"/>
    </location>
</feature>
<feature type="transmembrane region" description="Beta stranded" evidence="1">
    <location>
        <begin position="26"/>
        <end position="35"/>
    </location>
</feature>
<feature type="topological domain" description="Extracellular" evidence="1">
    <location>
        <begin position="36"/>
        <end position="44"/>
    </location>
</feature>
<feature type="transmembrane region" description="Beta stranded" evidence="1">
    <location>
        <begin position="45"/>
        <end position="54"/>
    </location>
</feature>
<feature type="topological domain" description="Periplasmic" evidence="1">
    <location>
        <begin position="55"/>
        <end position="59"/>
    </location>
</feature>
<feature type="transmembrane region" description="Beta stranded" evidence="1">
    <location>
        <begin position="60"/>
        <end position="69"/>
    </location>
</feature>
<feature type="topological domain" description="Extracellular" evidence="1">
    <location>
        <begin position="70"/>
        <end position="85"/>
    </location>
</feature>
<feature type="transmembrane region" description="Beta stranded" evidence="1">
    <location>
        <begin position="86"/>
        <end position="95"/>
    </location>
</feature>
<feature type="topological domain" description="Periplasmic" evidence="1">
    <location>
        <begin position="96"/>
        <end position="99"/>
    </location>
</feature>
<feature type="transmembrane region" description="Beta stranded" evidence="1">
    <location>
        <begin position="100"/>
        <end position="109"/>
    </location>
</feature>
<feature type="topological domain" description="Extracellular" evidence="1">
    <location>
        <begin position="110"/>
        <end position="129"/>
    </location>
</feature>
<feature type="transmembrane region" description="Beta stranded" evidence="1">
    <location>
        <begin position="130"/>
        <end position="139"/>
    </location>
</feature>
<feature type="topological domain" description="Periplasmic" evidence="1">
    <location>
        <begin position="140"/>
        <end position="143"/>
    </location>
</feature>
<feature type="transmembrane region" description="Beta stranded" evidence="1">
    <location>
        <begin position="144"/>
        <end position="153"/>
    </location>
</feature>
<feature type="topological domain" description="Extracellular" evidence="1">
    <location>
        <begin position="154"/>
        <end position="160"/>
    </location>
</feature>
<feature type="transmembrane region" description="Beta stranded" evidence="1">
    <location>
        <begin position="161"/>
        <end position="170"/>
    </location>
</feature>
<feature type="topological domain" description="Periplasmic" evidence="1">
    <location>
        <position position="171"/>
    </location>
</feature>
<dbReference type="EMBL" id="AE005174">
    <property type="protein sequence ID" value="AAG55186.1"/>
    <property type="molecule type" value="Genomic_DNA"/>
</dbReference>
<dbReference type="EMBL" id="BA000007">
    <property type="protein sequence ID" value="BAB34315.1"/>
    <property type="molecule type" value="Genomic_DNA"/>
</dbReference>
<dbReference type="PIR" id="D90740">
    <property type="entry name" value="D90740"/>
</dbReference>
<dbReference type="PIR" id="F85590">
    <property type="entry name" value="F85590"/>
</dbReference>
<dbReference type="RefSeq" id="NP_308919.1">
    <property type="nucleotide sequence ID" value="NC_002695.1"/>
</dbReference>
<dbReference type="RefSeq" id="WP_001295296.1">
    <property type="nucleotide sequence ID" value="NZ_VOAI01000006.1"/>
</dbReference>
<dbReference type="BMRB" id="P0A919"/>
<dbReference type="SMR" id="P0A919"/>
<dbReference type="STRING" id="155864.Z1036"/>
<dbReference type="GeneID" id="917632"/>
<dbReference type="GeneID" id="93776613"/>
<dbReference type="KEGG" id="ece:Z1036"/>
<dbReference type="KEGG" id="ecs:ECs_0892"/>
<dbReference type="PATRIC" id="fig|386585.9.peg.1006"/>
<dbReference type="eggNOG" id="COG3637">
    <property type="taxonomic scope" value="Bacteria"/>
</dbReference>
<dbReference type="HOGENOM" id="CLU_099385_1_0_6"/>
<dbReference type="OMA" id="RFNDWAS"/>
<dbReference type="Proteomes" id="UP000000558">
    <property type="component" value="Chromosome"/>
</dbReference>
<dbReference type="Proteomes" id="UP000002519">
    <property type="component" value="Chromosome"/>
</dbReference>
<dbReference type="GO" id="GO:0009279">
    <property type="term" value="C:cell outer membrane"/>
    <property type="evidence" value="ECO:0007669"/>
    <property type="project" value="UniProtKB-SubCell"/>
</dbReference>
<dbReference type="GO" id="GO:0044384">
    <property type="term" value="C:host outer membrane"/>
    <property type="evidence" value="ECO:0007669"/>
    <property type="project" value="InterPro"/>
</dbReference>
<dbReference type="Gene3D" id="2.40.160.20">
    <property type="match status" value="1"/>
</dbReference>
<dbReference type="InterPro" id="IPR051723">
    <property type="entry name" value="Bact_OM_Invasion-Related"/>
</dbReference>
<dbReference type="InterPro" id="IPR000758">
    <property type="entry name" value="Enterovir_OMP"/>
</dbReference>
<dbReference type="InterPro" id="IPR011250">
    <property type="entry name" value="OMP/PagP_b-brl"/>
</dbReference>
<dbReference type="InterPro" id="IPR027385">
    <property type="entry name" value="OMP_b-brl"/>
</dbReference>
<dbReference type="NCBIfam" id="NF006917">
    <property type="entry name" value="PRK09408.1"/>
    <property type="match status" value="1"/>
</dbReference>
<dbReference type="PANTHER" id="PTHR35892">
    <property type="entry name" value="OUTER MEMBRANE PROTEIN PAGN-RELATED"/>
    <property type="match status" value="1"/>
</dbReference>
<dbReference type="PANTHER" id="PTHR35892:SF3">
    <property type="entry name" value="OUTER MEMBRANE PROTEIN X"/>
    <property type="match status" value="1"/>
</dbReference>
<dbReference type="Pfam" id="PF13505">
    <property type="entry name" value="OMP_b-brl"/>
    <property type="match status" value="1"/>
</dbReference>
<dbReference type="PRINTS" id="PR00316">
    <property type="entry name" value="ENTEROVIROMP"/>
</dbReference>
<dbReference type="SUPFAM" id="SSF56925">
    <property type="entry name" value="OMPA-like"/>
    <property type="match status" value="1"/>
</dbReference>
<dbReference type="PROSITE" id="PS00694">
    <property type="entry name" value="ENT_VIR_OMP_1"/>
    <property type="match status" value="1"/>
</dbReference>
<dbReference type="PROSITE" id="PS00695">
    <property type="entry name" value="ENT_VIR_OMP_2"/>
    <property type="match status" value="1"/>
</dbReference>
<reference key="1">
    <citation type="journal article" date="2001" name="Nature">
        <title>Genome sequence of enterohaemorrhagic Escherichia coli O157:H7.</title>
        <authorList>
            <person name="Perna N.T."/>
            <person name="Plunkett G. III"/>
            <person name="Burland V."/>
            <person name="Mau B."/>
            <person name="Glasner J.D."/>
            <person name="Rose D.J."/>
            <person name="Mayhew G.F."/>
            <person name="Evans P.S."/>
            <person name="Gregor J."/>
            <person name="Kirkpatrick H.A."/>
            <person name="Posfai G."/>
            <person name="Hackett J."/>
            <person name="Klink S."/>
            <person name="Boutin A."/>
            <person name="Shao Y."/>
            <person name="Miller L."/>
            <person name="Grotbeck E.J."/>
            <person name="Davis N.W."/>
            <person name="Lim A."/>
            <person name="Dimalanta E.T."/>
            <person name="Potamousis K."/>
            <person name="Apodaca J."/>
            <person name="Anantharaman T.S."/>
            <person name="Lin J."/>
            <person name="Yen G."/>
            <person name="Schwartz D.C."/>
            <person name="Welch R.A."/>
            <person name="Blattner F.R."/>
        </authorList>
    </citation>
    <scope>NUCLEOTIDE SEQUENCE [LARGE SCALE GENOMIC DNA]</scope>
    <source>
        <strain>O157:H7 / EDL933 / ATCC 700927 / EHEC</strain>
    </source>
</reference>
<reference key="2">
    <citation type="journal article" date="2001" name="DNA Res.">
        <title>Complete genome sequence of enterohemorrhagic Escherichia coli O157:H7 and genomic comparison with a laboratory strain K-12.</title>
        <authorList>
            <person name="Hayashi T."/>
            <person name="Makino K."/>
            <person name="Ohnishi M."/>
            <person name="Kurokawa K."/>
            <person name="Ishii K."/>
            <person name="Yokoyama K."/>
            <person name="Han C.-G."/>
            <person name="Ohtsubo E."/>
            <person name="Nakayama K."/>
            <person name="Murata T."/>
            <person name="Tanaka M."/>
            <person name="Tobe T."/>
            <person name="Iida T."/>
            <person name="Takami H."/>
            <person name="Honda T."/>
            <person name="Sasakawa C."/>
            <person name="Ogasawara N."/>
            <person name="Yasunaga T."/>
            <person name="Kuhara S."/>
            <person name="Shiba T."/>
            <person name="Hattori M."/>
            <person name="Shinagawa H."/>
        </authorList>
    </citation>
    <scope>NUCLEOTIDE SEQUENCE [LARGE SCALE GENOMIC DNA]</scope>
    <source>
        <strain>O157:H7 / Sakai / RIMD 0509952 / EHEC</strain>
    </source>
</reference>
<sequence length="171" mass="18603">MKKIACLSALAAVLAFTAGTSVAATSTVTGGYAQSDAQGQMNKMGGFNLKYRYEEDNSPLGVIGSFTYTEKSRTASSGDYNKNQYYGITAGPAYRINDWASIYGVVGVGYGKFQTTEYPTYKHDTSDYGFSYGAGLQFNPMENVALDFSYEQSRIRSVDVGTWIAGVGYRF</sequence>
<keyword id="KW-0998">Cell outer membrane</keyword>
<keyword id="KW-0472">Membrane</keyword>
<keyword id="KW-1185">Reference proteome</keyword>
<keyword id="KW-0732">Signal</keyword>
<keyword id="KW-0812">Transmembrane</keyword>
<keyword id="KW-1134">Transmembrane beta strand</keyword>
<evidence type="ECO:0000250" key="1"/>
<evidence type="ECO:0000305" key="2"/>
<organism>
    <name type="scientific">Escherichia coli O157:H7</name>
    <dbReference type="NCBI Taxonomy" id="83334"/>
    <lineage>
        <taxon>Bacteria</taxon>
        <taxon>Pseudomonadati</taxon>
        <taxon>Pseudomonadota</taxon>
        <taxon>Gammaproteobacteria</taxon>
        <taxon>Enterobacterales</taxon>
        <taxon>Enterobacteriaceae</taxon>
        <taxon>Escherichia</taxon>
    </lineage>
</organism>
<accession>P0A919</accession>
<accession>P36546</accession>